<keyword id="KW-0067">ATP-binding</keyword>
<keyword id="KW-0460">Magnesium</keyword>
<keyword id="KW-0464">Manganese</keyword>
<keyword id="KW-0479">Metal-binding</keyword>
<keyword id="KW-0547">Nucleotide-binding</keyword>
<keyword id="KW-0548">Nucleotidyltransferase</keyword>
<keyword id="KW-0808">Transferase</keyword>
<sequence length="492" mass="53500">MTAHFPFDNSYVALPPNFFARVAPTPVAAPRLIKLNRPLAVQLGLDPDLLETPEGAEILSGNQMPETAASIAMAYAGHQFGNFVPQLGDGRAILLGEVVDRNGVRRDIQLKGAGRTPFSRMGDGRAALGPVLREYIVSEAMAALGIPTTRSLAAVLTGETVLRDPIQPGAVLTRVASSHIRVGTFQYFAARGDLASVRALADHAIARHYPEAAQAPSPYLALLEGVIGRQAELVASWMMVGFIHGVMNTDNCSVAGETIDYGPCAFMDTFDPKTVYSSIDQFGRYAYGNQPPIALWNLTRLAECLVRLLADDDDKGIEIAQTALGGFAEQFNAAYLAKLAAKLGLFTSQPDDQQLSQEFLTALAKGEADFTLAFRRLSDAAVDPSDLGEVRALFADPAAFDEWAPRWRARIATEPQDATTRQAAMRRVNPAYIPRNHRIEAVIRAAVDRDDFAPFEEILTVLANPFEEKAEFARYAEPPQPHEQVLETFCGT</sequence>
<dbReference type="EC" id="2.7.7.-" evidence="1"/>
<dbReference type="EC" id="2.7.7.108" evidence="1"/>
<dbReference type="EMBL" id="BX572602">
    <property type="protein sequence ID" value="CAE28485.1"/>
    <property type="molecule type" value="Genomic_DNA"/>
</dbReference>
<dbReference type="RefSeq" id="WP_011158590.1">
    <property type="nucleotide sequence ID" value="NZ_CP116810.1"/>
</dbReference>
<dbReference type="SMR" id="Q6N5D5"/>
<dbReference type="STRING" id="258594.RPA3044"/>
<dbReference type="GeneID" id="66894126"/>
<dbReference type="eggNOG" id="COG0397">
    <property type="taxonomic scope" value="Bacteria"/>
</dbReference>
<dbReference type="HOGENOM" id="CLU_010245_4_1_5"/>
<dbReference type="PhylomeDB" id="Q6N5D5"/>
<dbReference type="GO" id="GO:0070733">
    <property type="term" value="F:AMPylase activity"/>
    <property type="evidence" value="ECO:0007669"/>
    <property type="project" value="RHEA"/>
</dbReference>
<dbReference type="GO" id="GO:0005524">
    <property type="term" value="F:ATP binding"/>
    <property type="evidence" value="ECO:0007669"/>
    <property type="project" value="UniProtKB-UniRule"/>
</dbReference>
<dbReference type="GO" id="GO:0000287">
    <property type="term" value="F:magnesium ion binding"/>
    <property type="evidence" value="ECO:0007669"/>
    <property type="project" value="UniProtKB-UniRule"/>
</dbReference>
<dbReference type="HAMAP" id="MF_00692">
    <property type="entry name" value="YdiU_SelO"/>
    <property type="match status" value="1"/>
</dbReference>
<dbReference type="InterPro" id="IPR003846">
    <property type="entry name" value="SelO"/>
</dbReference>
<dbReference type="NCBIfam" id="NF000658">
    <property type="entry name" value="PRK00029.1"/>
    <property type="match status" value="1"/>
</dbReference>
<dbReference type="PANTHER" id="PTHR32057">
    <property type="entry name" value="PROTEIN ADENYLYLTRANSFERASE SELO, MITOCHONDRIAL"/>
    <property type="match status" value="1"/>
</dbReference>
<dbReference type="PANTHER" id="PTHR32057:SF14">
    <property type="entry name" value="PROTEIN ADENYLYLTRANSFERASE SELO, MITOCHONDRIAL"/>
    <property type="match status" value="1"/>
</dbReference>
<dbReference type="Pfam" id="PF02696">
    <property type="entry name" value="SelO"/>
    <property type="match status" value="1"/>
</dbReference>
<gene>
    <name evidence="1" type="primary">ydiU</name>
    <name evidence="1" type="synonym">selO</name>
    <name type="ordered locus">RPA3044</name>
</gene>
<feature type="chain" id="PRO_0000271857" description="Protein nucleotidyltransferase YdiU">
    <location>
        <begin position="1"/>
        <end position="492"/>
    </location>
</feature>
<feature type="active site" description="Proton acceptor" evidence="1">
    <location>
        <position position="250"/>
    </location>
</feature>
<feature type="binding site" evidence="1">
    <location>
        <position position="88"/>
    </location>
    <ligand>
        <name>ATP</name>
        <dbReference type="ChEBI" id="CHEBI:30616"/>
    </ligand>
</feature>
<feature type="binding site" evidence="1">
    <location>
        <position position="90"/>
    </location>
    <ligand>
        <name>ATP</name>
        <dbReference type="ChEBI" id="CHEBI:30616"/>
    </ligand>
</feature>
<feature type="binding site" evidence="1">
    <location>
        <position position="91"/>
    </location>
    <ligand>
        <name>ATP</name>
        <dbReference type="ChEBI" id="CHEBI:30616"/>
    </ligand>
</feature>
<feature type="binding site" evidence="1">
    <location>
        <position position="111"/>
    </location>
    <ligand>
        <name>ATP</name>
        <dbReference type="ChEBI" id="CHEBI:30616"/>
    </ligand>
</feature>
<feature type="binding site" evidence="1">
    <location>
        <position position="123"/>
    </location>
    <ligand>
        <name>ATP</name>
        <dbReference type="ChEBI" id="CHEBI:30616"/>
    </ligand>
</feature>
<feature type="binding site" evidence="1">
    <location>
        <position position="124"/>
    </location>
    <ligand>
        <name>ATP</name>
        <dbReference type="ChEBI" id="CHEBI:30616"/>
    </ligand>
</feature>
<feature type="binding site" evidence="1">
    <location>
        <position position="174"/>
    </location>
    <ligand>
        <name>ATP</name>
        <dbReference type="ChEBI" id="CHEBI:30616"/>
    </ligand>
</feature>
<feature type="binding site" evidence="1">
    <location>
        <position position="181"/>
    </location>
    <ligand>
        <name>ATP</name>
        <dbReference type="ChEBI" id="CHEBI:30616"/>
    </ligand>
</feature>
<feature type="binding site" evidence="1">
    <location>
        <position position="251"/>
    </location>
    <ligand>
        <name>Mg(2+)</name>
        <dbReference type="ChEBI" id="CHEBI:18420"/>
    </ligand>
</feature>
<feature type="binding site" evidence="1">
    <location>
        <position position="260"/>
    </location>
    <ligand>
        <name>ATP</name>
        <dbReference type="ChEBI" id="CHEBI:30616"/>
    </ligand>
</feature>
<feature type="binding site" evidence="1">
    <location>
        <position position="260"/>
    </location>
    <ligand>
        <name>Mg(2+)</name>
        <dbReference type="ChEBI" id="CHEBI:18420"/>
    </ligand>
</feature>
<accession>Q6N5D5</accession>
<name>SELO_RHOPA</name>
<protein>
    <recommendedName>
        <fullName evidence="1">Protein nucleotidyltransferase YdiU</fullName>
        <ecNumber evidence="1">2.7.7.-</ecNumber>
    </recommendedName>
    <alternativeName>
        <fullName evidence="1">Protein adenylyltransferase YdiU</fullName>
        <ecNumber evidence="1">2.7.7.108</ecNumber>
    </alternativeName>
    <alternativeName>
        <fullName evidence="1">Protein uridylyltransferase YdiU</fullName>
        <ecNumber evidence="1">2.7.7.-</ecNumber>
    </alternativeName>
</protein>
<proteinExistence type="inferred from homology"/>
<comment type="function">
    <text evidence="1">Nucleotidyltransferase involved in the post-translational modification of proteins. It can catalyze the addition of adenosine monophosphate (AMP) or uridine monophosphate (UMP) to a protein, resulting in modifications known as AMPylation and UMPylation.</text>
</comment>
<comment type="catalytic activity">
    <reaction evidence="1">
        <text>L-seryl-[protein] + ATP = 3-O-(5'-adenylyl)-L-seryl-[protein] + diphosphate</text>
        <dbReference type="Rhea" id="RHEA:58120"/>
        <dbReference type="Rhea" id="RHEA-COMP:9863"/>
        <dbReference type="Rhea" id="RHEA-COMP:15073"/>
        <dbReference type="ChEBI" id="CHEBI:29999"/>
        <dbReference type="ChEBI" id="CHEBI:30616"/>
        <dbReference type="ChEBI" id="CHEBI:33019"/>
        <dbReference type="ChEBI" id="CHEBI:142516"/>
        <dbReference type="EC" id="2.7.7.108"/>
    </reaction>
</comment>
<comment type="catalytic activity">
    <reaction evidence="1">
        <text>L-threonyl-[protein] + ATP = 3-O-(5'-adenylyl)-L-threonyl-[protein] + diphosphate</text>
        <dbReference type="Rhea" id="RHEA:54292"/>
        <dbReference type="Rhea" id="RHEA-COMP:11060"/>
        <dbReference type="Rhea" id="RHEA-COMP:13847"/>
        <dbReference type="ChEBI" id="CHEBI:30013"/>
        <dbReference type="ChEBI" id="CHEBI:30616"/>
        <dbReference type="ChEBI" id="CHEBI:33019"/>
        <dbReference type="ChEBI" id="CHEBI:138113"/>
        <dbReference type="EC" id="2.7.7.108"/>
    </reaction>
</comment>
<comment type="catalytic activity">
    <reaction evidence="1">
        <text>L-tyrosyl-[protein] + ATP = O-(5'-adenylyl)-L-tyrosyl-[protein] + diphosphate</text>
        <dbReference type="Rhea" id="RHEA:54288"/>
        <dbReference type="Rhea" id="RHEA-COMP:10136"/>
        <dbReference type="Rhea" id="RHEA-COMP:13846"/>
        <dbReference type="ChEBI" id="CHEBI:30616"/>
        <dbReference type="ChEBI" id="CHEBI:33019"/>
        <dbReference type="ChEBI" id="CHEBI:46858"/>
        <dbReference type="ChEBI" id="CHEBI:83624"/>
        <dbReference type="EC" id="2.7.7.108"/>
    </reaction>
</comment>
<comment type="catalytic activity">
    <reaction evidence="1">
        <text>L-histidyl-[protein] + UTP = N(tele)-(5'-uridylyl)-L-histidyl-[protein] + diphosphate</text>
        <dbReference type="Rhea" id="RHEA:83891"/>
        <dbReference type="Rhea" id="RHEA-COMP:9745"/>
        <dbReference type="Rhea" id="RHEA-COMP:20239"/>
        <dbReference type="ChEBI" id="CHEBI:29979"/>
        <dbReference type="ChEBI" id="CHEBI:33019"/>
        <dbReference type="ChEBI" id="CHEBI:46398"/>
        <dbReference type="ChEBI" id="CHEBI:233474"/>
    </reaction>
</comment>
<comment type="catalytic activity">
    <reaction evidence="1">
        <text>L-seryl-[protein] + UTP = O-(5'-uridylyl)-L-seryl-[protein] + diphosphate</text>
        <dbReference type="Rhea" id="RHEA:64604"/>
        <dbReference type="Rhea" id="RHEA-COMP:9863"/>
        <dbReference type="Rhea" id="RHEA-COMP:16635"/>
        <dbReference type="ChEBI" id="CHEBI:29999"/>
        <dbReference type="ChEBI" id="CHEBI:33019"/>
        <dbReference type="ChEBI" id="CHEBI:46398"/>
        <dbReference type="ChEBI" id="CHEBI:156051"/>
    </reaction>
</comment>
<comment type="catalytic activity">
    <reaction evidence="1">
        <text>L-tyrosyl-[protein] + UTP = O-(5'-uridylyl)-L-tyrosyl-[protein] + diphosphate</text>
        <dbReference type="Rhea" id="RHEA:83887"/>
        <dbReference type="Rhea" id="RHEA-COMP:10136"/>
        <dbReference type="Rhea" id="RHEA-COMP:20238"/>
        <dbReference type="ChEBI" id="CHEBI:33019"/>
        <dbReference type="ChEBI" id="CHEBI:46398"/>
        <dbReference type="ChEBI" id="CHEBI:46858"/>
        <dbReference type="ChEBI" id="CHEBI:90602"/>
    </reaction>
</comment>
<comment type="cofactor">
    <cofactor evidence="1">
        <name>Mg(2+)</name>
        <dbReference type="ChEBI" id="CHEBI:18420"/>
    </cofactor>
    <cofactor evidence="1">
        <name>Mn(2+)</name>
        <dbReference type="ChEBI" id="CHEBI:29035"/>
    </cofactor>
</comment>
<comment type="similarity">
    <text evidence="1">Belongs to the SELO family.</text>
</comment>
<organism>
    <name type="scientific">Rhodopseudomonas palustris (strain ATCC BAA-98 / CGA009)</name>
    <dbReference type="NCBI Taxonomy" id="258594"/>
    <lineage>
        <taxon>Bacteria</taxon>
        <taxon>Pseudomonadati</taxon>
        <taxon>Pseudomonadota</taxon>
        <taxon>Alphaproteobacteria</taxon>
        <taxon>Hyphomicrobiales</taxon>
        <taxon>Nitrobacteraceae</taxon>
        <taxon>Rhodopseudomonas</taxon>
    </lineage>
</organism>
<reference key="1">
    <citation type="journal article" date="2004" name="Nat. Biotechnol.">
        <title>Complete genome sequence of the metabolically versatile photosynthetic bacterium Rhodopseudomonas palustris.</title>
        <authorList>
            <person name="Larimer F.W."/>
            <person name="Chain P."/>
            <person name="Hauser L."/>
            <person name="Lamerdin J.E."/>
            <person name="Malfatti S."/>
            <person name="Do L."/>
            <person name="Land M.L."/>
            <person name="Pelletier D.A."/>
            <person name="Beatty J.T."/>
            <person name="Lang A.S."/>
            <person name="Tabita F.R."/>
            <person name="Gibson J.L."/>
            <person name="Hanson T.E."/>
            <person name="Bobst C."/>
            <person name="Torres y Torres J.L."/>
            <person name="Peres C."/>
            <person name="Harrison F.H."/>
            <person name="Gibson J."/>
            <person name="Harwood C.S."/>
        </authorList>
    </citation>
    <scope>NUCLEOTIDE SEQUENCE [LARGE SCALE GENOMIC DNA]</scope>
    <source>
        <strain>ATCC BAA-98 / CGA009</strain>
    </source>
</reference>
<evidence type="ECO:0000255" key="1">
    <source>
        <dbReference type="HAMAP-Rule" id="MF_00692"/>
    </source>
</evidence>